<gene>
    <name evidence="1" type="primary">ilvD</name>
    <name type="ordered locus">Shal_3941</name>
</gene>
<feature type="chain" id="PRO_1000073989" description="Dihydroxy-acid dehydratase">
    <location>
        <begin position="1"/>
        <end position="615"/>
    </location>
</feature>
<feature type="active site" description="Proton acceptor" evidence="1">
    <location>
        <position position="517"/>
    </location>
</feature>
<feature type="binding site" evidence="1">
    <location>
        <position position="81"/>
    </location>
    <ligand>
        <name>Mg(2+)</name>
        <dbReference type="ChEBI" id="CHEBI:18420"/>
    </ligand>
</feature>
<feature type="binding site" evidence="1">
    <location>
        <position position="122"/>
    </location>
    <ligand>
        <name>[2Fe-2S] cluster</name>
        <dbReference type="ChEBI" id="CHEBI:190135"/>
    </ligand>
</feature>
<feature type="binding site" evidence="1">
    <location>
        <position position="123"/>
    </location>
    <ligand>
        <name>Mg(2+)</name>
        <dbReference type="ChEBI" id="CHEBI:18420"/>
    </ligand>
</feature>
<feature type="binding site" description="via carbamate group" evidence="1">
    <location>
        <position position="124"/>
    </location>
    <ligand>
        <name>Mg(2+)</name>
        <dbReference type="ChEBI" id="CHEBI:18420"/>
    </ligand>
</feature>
<feature type="binding site" evidence="1">
    <location>
        <position position="195"/>
    </location>
    <ligand>
        <name>[2Fe-2S] cluster</name>
        <dbReference type="ChEBI" id="CHEBI:190135"/>
    </ligand>
</feature>
<feature type="binding site" evidence="1">
    <location>
        <position position="491"/>
    </location>
    <ligand>
        <name>Mg(2+)</name>
        <dbReference type="ChEBI" id="CHEBI:18420"/>
    </ligand>
</feature>
<feature type="modified residue" description="N6-carboxylysine" evidence="1">
    <location>
        <position position="124"/>
    </location>
</feature>
<comment type="function">
    <text evidence="1">Functions in the biosynthesis of branched-chain amino acids. Catalyzes the dehydration of (2R,3R)-2,3-dihydroxy-3-methylpentanoate (2,3-dihydroxy-3-methylvalerate) into 2-oxo-3-methylpentanoate (2-oxo-3-methylvalerate) and of (2R)-2,3-dihydroxy-3-methylbutanoate (2,3-dihydroxyisovalerate) into 2-oxo-3-methylbutanoate (2-oxoisovalerate), the penultimate precursor to L-isoleucine and L-valine, respectively.</text>
</comment>
<comment type="catalytic activity">
    <reaction evidence="1">
        <text>(2R)-2,3-dihydroxy-3-methylbutanoate = 3-methyl-2-oxobutanoate + H2O</text>
        <dbReference type="Rhea" id="RHEA:24809"/>
        <dbReference type="ChEBI" id="CHEBI:11851"/>
        <dbReference type="ChEBI" id="CHEBI:15377"/>
        <dbReference type="ChEBI" id="CHEBI:49072"/>
        <dbReference type="EC" id="4.2.1.9"/>
    </reaction>
    <physiologicalReaction direction="left-to-right" evidence="1">
        <dbReference type="Rhea" id="RHEA:24810"/>
    </physiologicalReaction>
</comment>
<comment type="catalytic activity">
    <reaction evidence="1">
        <text>(2R,3R)-2,3-dihydroxy-3-methylpentanoate = (S)-3-methyl-2-oxopentanoate + H2O</text>
        <dbReference type="Rhea" id="RHEA:27694"/>
        <dbReference type="ChEBI" id="CHEBI:15377"/>
        <dbReference type="ChEBI" id="CHEBI:35146"/>
        <dbReference type="ChEBI" id="CHEBI:49258"/>
        <dbReference type="EC" id="4.2.1.9"/>
    </reaction>
    <physiologicalReaction direction="left-to-right" evidence="1">
        <dbReference type="Rhea" id="RHEA:27695"/>
    </physiologicalReaction>
</comment>
<comment type="cofactor">
    <cofactor evidence="1">
        <name>[2Fe-2S] cluster</name>
        <dbReference type="ChEBI" id="CHEBI:190135"/>
    </cofactor>
    <text evidence="1">Binds 1 [2Fe-2S] cluster per subunit. This cluster acts as a Lewis acid cofactor.</text>
</comment>
<comment type="cofactor">
    <cofactor evidence="1">
        <name>Mg(2+)</name>
        <dbReference type="ChEBI" id="CHEBI:18420"/>
    </cofactor>
</comment>
<comment type="pathway">
    <text evidence="1">Amino-acid biosynthesis; L-isoleucine biosynthesis; L-isoleucine from 2-oxobutanoate: step 3/4.</text>
</comment>
<comment type="pathway">
    <text evidence="1">Amino-acid biosynthesis; L-valine biosynthesis; L-valine from pyruvate: step 3/4.</text>
</comment>
<comment type="subunit">
    <text evidence="1">Homodimer.</text>
</comment>
<comment type="similarity">
    <text evidence="1">Belongs to the IlvD/Edd family.</text>
</comment>
<keyword id="KW-0001">2Fe-2S</keyword>
<keyword id="KW-0028">Amino-acid biosynthesis</keyword>
<keyword id="KW-0100">Branched-chain amino acid biosynthesis</keyword>
<keyword id="KW-0408">Iron</keyword>
<keyword id="KW-0411">Iron-sulfur</keyword>
<keyword id="KW-0456">Lyase</keyword>
<keyword id="KW-0460">Magnesium</keyword>
<keyword id="KW-0479">Metal-binding</keyword>
<protein>
    <recommendedName>
        <fullName evidence="1">Dihydroxy-acid dehydratase</fullName>
        <shortName evidence="1">DAD</shortName>
        <ecNumber evidence="1">4.2.1.9</ecNumber>
    </recommendedName>
</protein>
<organism>
    <name type="scientific">Shewanella halifaxensis (strain HAW-EB4)</name>
    <dbReference type="NCBI Taxonomy" id="458817"/>
    <lineage>
        <taxon>Bacteria</taxon>
        <taxon>Pseudomonadati</taxon>
        <taxon>Pseudomonadota</taxon>
        <taxon>Gammaproteobacteria</taxon>
        <taxon>Alteromonadales</taxon>
        <taxon>Shewanellaceae</taxon>
        <taxon>Shewanella</taxon>
    </lineage>
</organism>
<name>ILVD_SHEHH</name>
<accession>B0TJR3</accession>
<sequence length="615" mass="65141">MPKLRSATSTEGRNMAGARALWRATGVKDNDFGKPIIAIANSFTQFVPGHVHLKDMGSLVAGAIEEAGGIAKEFNTIAVDDGIAMGHGGMLYSLPSRELIADSVEYMVNAHCADALVCISNCDKITPGMLMASLRLNIPVIFVSGGPMEAGKTKLSDQLIKLDLVDAMVAGADSRVSDADSEQIERSACPTCGSCSGMFTANSMNCLTEALGLSLPGNGSMLATHADRRELFLEAGRRIMDLATRYYQHDDESALPRNIANFKAFENAMTLDIAMGGSSNTVLHLLASAQEGEVDFTMDDIDRLSRLVPHLCKVAPSTPKYHMEDVHRAGGVMGILGELDRANLLHNDVYHVAGSNLADVLARFDIVQTDDAAVHKFFSAGPAGIPTTKAFSQDCRWDSVDNDRKEGCIRSREFAFSQEGGLAVLSGNVALDGCIVKTAGVEVENHTFIGSARVFESQDDAVAGILGGEVVAGDVVVIRYEGPKGGPGMQEMLYPTSYLKSRGLGTKCALITDGRFSGGTSGLSIGHVSPEAAAGGTIGLVQTGDRIEIDIPARSIKLAISDIELAARRTAMEALGKDAWKPLGRVRQVSMALKAYALLATSADKGAVRDTSKLV</sequence>
<proteinExistence type="inferred from homology"/>
<evidence type="ECO:0000255" key="1">
    <source>
        <dbReference type="HAMAP-Rule" id="MF_00012"/>
    </source>
</evidence>
<reference key="1">
    <citation type="submission" date="2008-01" db="EMBL/GenBank/DDBJ databases">
        <title>Complete sequence of Shewanella halifaxensis HAW-EB4.</title>
        <authorList>
            <consortium name="US DOE Joint Genome Institute"/>
            <person name="Copeland A."/>
            <person name="Lucas S."/>
            <person name="Lapidus A."/>
            <person name="Glavina del Rio T."/>
            <person name="Dalin E."/>
            <person name="Tice H."/>
            <person name="Bruce D."/>
            <person name="Goodwin L."/>
            <person name="Pitluck S."/>
            <person name="Sims D."/>
            <person name="Brettin T."/>
            <person name="Detter J.C."/>
            <person name="Han C."/>
            <person name="Kuske C.R."/>
            <person name="Schmutz J."/>
            <person name="Larimer F."/>
            <person name="Land M."/>
            <person name="Hauser L."/>
            <person name="Kyrpides N."/>
            <person name="Kim E."/>
            <person name="Zhao J.-S."/>
            <person name="Richardson P."/>
        </authorList>
    </citation>
    <scope>NUCLEOTIDE SEQUENCE [LARGE SCALE GENOMIC DNA]</scope>
    <source>
        <strain>HAW-EB4</strain>
    </source>
</reference>
<dbReference type="EC" id="4.2.1.9" evidence="1"/>
<dbReference type="EMBL" id="CP000931">
    <property type="protein sequence ID" value="ABZ78481.1"/>
    <property type="molecule type" value="Genomic_DNA"/>
</dbReference>
<dbReference type="RefSeq" id="WP_012278998.1">
    <property type="nucleotide sequence ID" value="NC_010334.1"/>
</dbReference>
<dbReference type="SMR" id="B0TJR3"/>
<dbReference type="STRING" id="458817.Shal_3941"/>
<dbReference type="KEGG" id="shl:Shal_3941"/>
<dbReference type="eggNOG" id="COG0129">
    <property type="taxonomic scope" value="Bacteria"/>
</dbReference>
<dbReference type="HOGENOM" id="CLU_014271_4_2_6"/>
<dbReference type="OrthoDB" id="9807077at2"/>
<dbReference type="UniPathway" id="UPA00047">
    <property type="reaction ID" value="UER00057"/>
</dbReference>
<dbReference type="UniPathway" id="UPA00049">
    <property type="reaction ID" value="UER00061"/>
</dbReference>
<dbReference type="Proteomes" id="UP000001317">
    <property type="component" value="Chromosome"/>
</dbReference>
<dbReference type="GO" id="GO:0005829">
    <property type="term" value="C:cytosol"/>
    <property type="evidence" value="ECO:0007669"/>
    <property type="project" value="TreeGrafter"/>
</dbReference>
<dbReference type="GO" id="GO:0051537">
    <property type="term" value="F:2 iron, 2 sulfur cluster binding"/>
    <property type="evidence" value="ECO:0007669"/>
    <property type="project" value="UniProtKB-UniRule"/>
</dbReference>
<dbReference type="GO" id="GO:0004160">
    <property type="term" value="F:dihydroxy-acid dehydratase activity"/>
    <property type="evidence" value="ECO:0007669"/>
    <property type="project" value="UniProtKB-UniRule"/>
</dbReference>
<dbReference type="GO" id="GO:0000287">
    <property type="term" value="F:magnesium ion binding"/>
    <property type="evidence" value="ECO:0007669"/>
    <property type="project" value="UniProtKB-UniRule"/>
</dbReference>
<dbReference type="GO" id="GO:0009097">
    <property type="term" value="P:isoleucine biosynthetic process"/>
    <property type="evidence" value="ECO:0007669"/>
    <property type="project" value="UniProtKB-UniRule"/>
</dbReference>
<dbReference type="GO" id="GO:0009099">
    <property type="term" value="P:L-valine biosynthetic process"/>
    <property type="evidence" value="ECO:0007669"/>
    <property type="project" value="UniProtKB-UniRule"/>
</dbReference>
<dbReference type="FunFam" id="3.50.30.80:FF:000001">
    <property type="entry name" value="Dihydroxy-acid dehydratase"/>
    <property type="match status" value="1"/>
</dbReference>
<dbReference type="Gene3D" id="3.50.30.80">
    <property type="entry name" value="IlvD/EDD C-terminal domain-like"/>
    <property type="match status" value="1"/>
</dbReference>
<dbReference type="HAMAP" id="MF_00012">
    <property type="entry name" value="IlvD"/>
    <property type="match status" value="1"/>
</dbReference>
<dbReference type="InterPro" id="IPR042096">
    <property type="entry name" value="Dihydro-acid_dehy_C"/>
</dbReference>
<dbReference type="InterPro" id="IPR004404">
    <property type="entry name" value="DihydroxyA_deHydtase"/>
</dbReference>
<dbReference type="InterPro" id="IPR020558">
    <property type="entry name" value="DiOHA_6PGluconate_deHydtase_CS"/>
</dbReference>
<dbReference type="InterPro" id="IPR056740">
    <property type="entry name" value="ILV_EDD_C"/>
</dbReference>
<dbReference type="InterPro" id="IPR000581">
    <property type="entry name" value="ILV_EDD_N"/>
</dbReference>
<dbReference type="InterPro" id="IPR037237">
    <property type="entry name" value="IlvD/EDD_N"/>
</dbReference>
<dbReference type="NCBIfam" id="TIGR00110">
    <property type="entry name" value="ilvD"/>
    <property type="match status" value="1"/>
</dbReference>
<dbReference type="NCBIfam" id="NF009103">
    <property type="entry name" value="PRK12448.1"/>
    <property type="match status" value="1"/>
</dbReference>
<dbReference type="PANTHER" id="PTHR43661">
    <property type="entry name" value="D-XYLONATE DEHYDRATASE"/>
    <property type="match status" value="1"/>
</dbReference>
<dbReference type="PANTHER" id="PTHR43661:SF3">
    <property type="entry name" value="D-XYLONATE DEHYDRATASE YAGF-RELATED"/>
    <property type="match status" value="1"/>
</dbReference>
<dbReference type="Pfam" id="PF24877">
    <property type="entry name" value="ILV_EDD_C"/>
    <property type="match status" value="1"/>
</dbReference>
<dbReference type="Pfam" id="PF00920">
    <property type="entry name" value="ILVD_EDD_N"/>
    <property type="match status" value="1"/>
</dbReference>
<dbReference type="SUPFAM" id="SSF143975">
    <property type="entry name" value="IlvD/EDD N-terminal domain-like"/>
    <property type="match status" value="1"/>
</dbReference>
<dbReference type="SUPFAM" id="SSF52016">
    <property type="entry name" value="LeuD/IlvD-like"/>
    <property type="match status" value="1"/>
</dbReference>
<dbReference type="PROSITE" id="PS00886">
    <property type="entry name" value="ILVD_EDD_1"/>
    <property type="match status" value="1"/>
</dbReference>
<dbReference type="PROSITE" id="PS00887">
    <property type="entry name" value="ILVD_EDD_2"/>
    <property type="match status" value="1"/>
</dbReference>